<protein>
    <recommendedName>
        <fullName evidence="1">Large ribosomal subunit protein uL11</fullName>
    </recommendedName>
    <alternativeName>
        <fullName evidence="2">50S ribosomal protein L11</fullName>
    </alternativeName>
</protein>
<organism>
    <name type="scientific">Tropheryma whipplei (strain TW08/27)</name>
    <name type="common">Whipple's bacillus</name>
    <dbReference type="NCBI Taxonomy" id="218496"/>
    <lineage>
        <taxon>Bacteria</taxon>
        <taxon>Bacillati</taxon>
        <taxon>Actinomycetota</taxon>
        <taxon>Actinomycetes</taxon>
        <taxon>Micrococcales</taxon>
        <taxon>Tropherymataceae</taxon>
        <taxon>Tropheryma</taxon>
    </lineage>
</organism>
<comment type="function">
    <text evidence="1">Forms part of the ribosomal stalk which helps the ribosome interact with GTP-bound translation factors.</text>
</comment>
<comment type="subunit">
    <text evidence="1">Part of the ribosomal stalk of the 50S ribosomal subunit. Interacts with L10 and the large rRNA to form the base of the stalk. L10 forms an elongated spine to which L12 dimers bind in a sequential fashion forming a multimeric L10(L12)X complex.</text>
</comment>
<comment type="PTM">
    <text evidence="1">One or more lysine residues are methylated.</text>
</comment>
<comment type="similarity">
    <text evidence="1">Belongs to the universal ribosomal protein uL11 family.</text>
</comment>
<reference key="1">
    <citation type="journal article" date="2003" name="Lancet">
        <title>Sequencing and analysis of the genome of the Whipple's disease bacterium Tropheryma whipplei.</title>
        <authorList>
            <person name="Bentley S.D."/>
            <person name="Maiwald M."/>
            <person name="Murphy L.D."/>
            <person name="Pallen M.J."/>
            <person name="Yeats C.A."/>
            <person name="Dover L.G."/>
            <person name="Norbertczak H.T."/>
            <person name="Besra G.S."/>
            <person name="Quail M.A."/>
            <person name="Harris D.E."/>
            <person name="von Herbay A."/>
            <person name="Goble A."/>
            <person name="Rutter S."/>
            <person name="Squares R."/>
            <person name="Squares S."/>
            <person name="Barrell B.G."/>
            <person name="Parkhill J."/>
            <person name="Relman D.A."/>
        </authorList>
    </citation>
    <scope>NUCLEOTIDE SEQUENCE [LARGE SCALE GENOMIC DNA]</scope>
    <source>
        <strain>TW08/27</strain>
    </source>
</reference>
<accession>Q83HA9</accession>
<proteinExistence type="inferred from homology"/>
<keyword id="KW-0488">Methylation</keyword>
<keyword id="KW-0687">Ribonucleoprotein</keyword>
<keyword id="KW-0689">Ribosomal protein</keyword>
<keyword id="KW-0694">RNA-binding</keyword>
<keyword id="KW-0699">rRNA-binding</keyword>
<feature type="chain" id="PRO_0000104404" description="Large ribosomal subunit protein uL11">
    <location>
        <begin position="1"/>
        <end position="141"/>
    </location>
</feature>
<name>RL11_TROW8</name>
<gene>
    <name evidence="1" type="primary">rplK</name>
    <name type="ordered locus">TW731</name>
</gene>
<evidence type="ECO:0000255" key="1">
    <source>
        <dbReference type="HAMAP-Rule" id="MF_00736"/>
    </source>
</evidence>
<evidence type="ECO:0000305" key="2"/>
<dbReference type="EMBL" id="BX251412">
    <property type="protein sequence ID" value="CAD67390.1"/>
    <property type="molecule type" value="Genomic_DNA"/>
</dbReference>
<dbReference type="RefSeq" id="WP_011096668.1">
    <property type="nucleotide sequence ID" value="NC_004551.1"/>
</dbReference>
<dbReference type="SMR" id="Q83HA9"/>
<dbReference type="GeneID" id="67388508"/>
<dbReference type="KEGG" id="tws:TW731"/>
<dbReference type="HOGENOM" id="CLU_074237_2_1_11"/>
<dbReference type="GO" id="GO:0022625">
    <property type="term" value="C:cytosolic large ribosomal subunit"/>
    <property type="evidence" value="ECO:0007669"/>
    <property type="project" value="TreeGrafter"/>
</dbReference>
<dbReference type="GO" id="GO:0070180">
    <property type="term" value="F:large ribosomal subunit rRNA binding"/>
    <property type="evidence" value="ECO:0007669"/>
    <property type="project" value="UniProtKB-UniRule"/>
</dbReference>
<dbReference type="GO" id="GO:0003735">
    <property type="term" value="F:structural constituent of ribosome"/>
    <property type="evidence" value="ECO:0007669"/>
    <property type="project" value="InterPro"/>
</dbReference>
<dbReference type="GO" id="GO:0006412">
    <property type="term" value="P:translation"/>
    <property type="evidence" value="ECO:0007669"/>
    <property type="project" value="UniProtKB-UniRule"/>
</dbReference>
<dbReference type="CDD" id="cd00349">
    <property type="entry name" value="Ribosomal_L11"/>
    <property type="match status" value="1"/>
</dbReference>
<dbReference type="FunFam" id="1.10.10.250:FF:000001">
    <property type="entry name" value="50S ribosomal protein L11"/>
    <property type="match status" value="1"/>
</dbReference>
<dbReference type="FunFam" id="3.30.1550.10:FF:000001">
    <property type="entry name" value="50S ribosomal protein L11"/>
    <property type="match status" value="1"/>
</dbReference>
<dbReference type="Gene3D" id="1.10.10.250">
    <property type="entry name" value="Ribosomal protein L11, C-terminal domain"/>
    <property type="match status" value="1"/>
</dbReference>
<dbReference type="Gene3D" id="3.30.1550.10">
    <property type="entry name" value="Ribosomal protein L11/L12, N-terminal domain"/>
    <property type="match status" value="1"/>
</dbReference>
<dbReference type="HAMAP" id="MF_00736">
    <property type="entry name" value="Ribosomal_uL11"/>
    <property type="match status" value="1"/>
</dbReference>
<dbReference type="InterPro" id="IPR000911">
    <property type="entry name" value="Ribosomal_uL11"/>
</dbReference>
<dbReference type="InterPro" id="IPR006519">
    <property type="entry name" value="Ribosomal_uL11_bac-typ"/>
</dbReference>
<dbReference type="InterPro" id="IPR020783">
    <property type="entry name" value="Ribosomal_uL11_C"/>
</dbReference>
<dbReference type="InterPro" id="IPR036769">
    <property type="entry name" value="Ribosomal_uL11_C_sf"/>
</dbReference>
<dbReference type="InterPro" id="IPR020784">
    <property type="entry name" value="Ribosomal_uL11_N"/>
</dbReference>
<dbReference type="InterPro" id="IPR036796">
    <property type="entry name" value="Ribosomal_uL11_N_sf"/>
</dbReference>
<dbReference type="NCBIfam" id="TIGR01632">
    <property type="entry name" value="L11_bact"/>
    <property type="match status" value="1"/>
</dbReference>
<dbReference type="PANTHER" id="PTHR11661">
    <property type="entry name" value="60S RIBOSOMAL PROTEIN L12"/>
    <property type="match status" value="1"/>
</dbReference>
<dbReference type="PANTHER" id="PTHR11661:SF1">
    <property type="entry name" value="LARGE RIBOSOMAL SUBUNIT PROTEIN UL11M"/>
    <property type="match status" value="1"/>
</dbReference>
<dbReference type="Pfam" id="PF00298">
    <property type="entry name" value="Ribosomal_L11"/>
    <property type="match status" value="1"/>
</dbReference>
<dbReference type="Pfam" id="PF03946">
    <property type="entry name" value="Ribosomal_L11_N"/>
    <property type="match status" value="1"/>
</dbReference>
<dbReference type="SMART" id="SM00649">
    <property type="entry name" value="RL11"/>
    <property type="match status" value="1"/>
</dbReference>
<dbReference type="SUPFAM" id="SSF54747">
    <property type="entry name" value="Ribosomal L11/L12e N-terminal domain"/>
    <property type="match status" value="1"/>
</dbReference>
<dbReference type="SUPFAM" id="SSF46906">
    <property type="entry name" value="Ribosomal protein L11, C-terminal domain"/>
    <property type="match status" value="1"/>
</dbReference>
<sequence length="141" mass="14874">MADKKVVGVIKLQIQAGAANPAPPVGPALGQHGVNIMEFCKAYNAATESQKGNVIPVEISVYEDRSFTFVLKTPPVVELIKKAARISKGSPTPHNLKVAQITPEQVKSIAEAKMVDLNANDIDAASKIVRGTARSMGVTVA</sequence>